<proteinExistence type="inferred from homology"/>
<sequence length="106" mass="12201">MNDSEFHRLADQLWLTIEERLDDWDGDSDIDCEINGGVLTITFENGSKIIINRQEPLHQVWLATKQGGYHFDLKGDEWICDRSGETFRDLLEQAATQQAGETVSFR</sequence>
<accession>B5YY53</accession>
<feature type="chain" id="PRO_1000096244" description="Iron-sulfur cluster assembly protein CyaY">
    <location>
        <begin position="1"/>
        <end position="106"/>
    </location>
</feature>
<organism>
    <name type="scientific">Escherichia coli O157:H7 (strain EC4115 / EHEC)</name>
    <dbReference type="NCBI Taxonomy" id="444450"/>
    <lineage>
        <taxon>Bacteria</taxon>
        <taxon>Pseudomonadati</taxon>
        <taxon>Pseudomonadota</taxon>
        <taxon>Gammaproteobacteria</taxon>
        <taxon>Enterobacterales</taxon>
        <taxon>Enterobacteriaceae</taxon>
        <taxon>Escherichia</taxon>
    </lineage>
</organism>
<protein>
    <recommendedName>
        <fullName evidence="1">Iron-sulfur cluster assembly protein CyaY</fullName>
    </recommendedName>
</protein>
<reference key="1">
    <citation type="journal article" date="2011" name="Proc. Natl. Acad. Sci. U.S.A.">
        <title>Genomic anatomy of Escherichia coli O157:H7 outbreaks.</title>
        <authorList>
            <person name="Eppinger M."/>
            <person name="Mammel M.K."/>
            <person name="Leclerc J.E."/>
            <person name="Ravel J."/>
            <person name="Cebula T.A."/>
        </authorList>
    </citation>
    <scope>NUCLEOTIDE SEQUENCE [LARGE SCALE GENOMIC DNA]</scope>
    <source>
        <strain>EC4115 / EHEC</strain>
    </source>
</reference>
<keyword id="KW-0408">Iron</keyword>
<keyword id="KW-0479">Metal-binding</keyword>
<comment type="function">
    <text evidence="1">Involved in iron-sulfur (Fe-S) cluster assembly. May act as a regulator of Fe-S biogenesis.</text>
</comment>
<comment type="similarity">
    <text evidence="1">Belongs to the frataxin family.</text>
</comment>
<gene>
    <name evidence="1" type="primary">cyaY</name>
    <name type="ordered locus">ECH74115_5245</name>
</gene>
<name>CYAY_ECO5E</name>
<evidence type="ECO:0000255" key="1">
    <source>
        <dbReference type="HAMAP-Rule" id="MF_00142"/>
    </source>
</evidence>
<dbReference type="EMBL" id="CP001164">
    <property type="protein sequence ID" value="ACI38782.1"/>
    <property type="molecule type" value="Genomic_DNA"/>
</dbReference>
<dbReference type="RefSeq" id="WP_000999944.1">
    <property type="nucleotide sequence ID" value="NC_011353.1"/>
</dbReference>
<dbReference type="SMR" id="B5YY53"/>
<dbReference type="KEGG" id="ecf:ECH74115_5245"/>
<dbReference type="HOGENOM" id="CLU_080880_3_0_6"/>
<dbReference type="GO" id="GO:0005829">
    <property type="term" value="C:cytosol"/>
    <property type="evidence" value="ECO:0007669"/>
    <property type="project" value="TreeGrafter"/>
</dbReference>
<dbReference type="GO" id="GO:0008199">
    <property type="term" value="F:ferric iron binding"/>
    <property type="evidence" value="ECO:0007669"/>
    <property type="project" value="InterPro"/>
</dbReference>
<dbReference type="GO" id="GO:0008198">
    <property type="term" value="F:ferrous iron binding"/>
    <property type="evidence" value="ECO:0007669"/>
    <property type="project" value="TreeGrafter"/>
</dbReference>
<dbReference type="GO" id="GO:0016226">
    <property type="term" value="P:iron-sulfur cluster assembly"/>
    <property type="evidence" value="ECO:0007669"/>
    <property type="project" value="UniProtKB-UniRule"/>
</dbReference>
<dbReference type="CDD" id="cd00503">
    <property type="entry name" value="Frataxin"/>
    <property type="match status" value="1"/>
</dbReference>
<dbReference type="FunFam" id="3.30.920.10:FF:000001">
    <property type="entry name" value="Iron-sulfur cluster assembly protein CyaY"/>
    <property type="match status" value="1"/>
</dbReference>
<dbReference type="Gene3D" id="3.30.920.10">
    <property type="entry name" value="Frataxin/CyaY"/>
    <property type="match status" value="1"/>
</dbReference>
<dbReference type="HAMAP" id="MF_00142">
    <property type="entry name" value="CyaY"/>
    <property type="match status" value="1"/>
</dbReference>
<dbReference type="InterPro" id="IPR047584">
    <property type="entry name" value="CyaY"/>
</dbReference>
<dbReference type="InterPro" id="IPR002908">
    <property type="entry name" value="Frataxin/CyaY"/>
</dbReference>
<dbReference type="InterPro" id="IPR036524">
    <property type="entry name" value="Frataxin/CyaY_sf"/>
</dbReference>
<dbReference type="InterPro" id="IPR020895">
    <property type="entry name" value="Frataxin_CS"/>
</dbReference>
<dbReference type="NCBIfam" id="TIGR03421">
    <property type="entry name" value="FeS_CyaY"/>
    <property type="match status" value="1"/>
</dbReference>
<dbReference type="PANTHER" id="PTHR16821">
    <property type="entry name" value="FRATAXIN"/>
    <property type="match status" value="1"/>
</dbReference>
<dbReference type="PANTHER" id="PTHR16821:SF2">
    <property type="entry name" value="FRATAXIN, MITOCHONDRIAL"/>
    <property type="match status" value="1"/>
</dbReference>
<dbReference type="Pfam" id="PF01491">
    <property type="entry name" value="Frataxin_Cyay"/>
    <property type="match status" value="1"/>
</dbReference>
<dbReference type="SMART" id="SM01219">
    <property type="entry name" value="Frataxin_Cyay"/>
    <property type="match status" value="1"/>
</dbReference>
<dbReference type="SUPFAM" id="SSF55387">
    <property type="entry name" value="Frataxin/Nqo15-like"/>
    <property type="match status" value="1"/>
</dbReference>
<dbReference type="PROSITE" id="PS01344">
    <property type="entry name" value="FRATAXIN_1"/>
    <property type="match status" value="1"/>
</dbReference>
<dbReference type="PROSITE" id="PS50810">
    <property type="entry name" value="FRATAXIN_2"/>
    <property type="match status" value="1"/>
</dbReference>